<protein>
    <recommendedName>
        <fullName>Late expression factor 3</fullName>
    </recommendedName>
</protein>
<proteinExistence type="inferred from homology"/>
<keyword id="KW-0238">DNA-binding</keyword>
<keyword id="KW-0244">Early protein</keyword>
<keyword id="KW-1048">Host nucleus</keyword>
<keyword id="KW-1185">Reference proteome</keyword>
<keyword id="KW-0804">Transcription</keyword>
<keyword id="KW-0805">Transcription regulation</keyword>
<comment type="function">
    <text>Required for late and very late gene expression. Lef-3 could be a single-stranded DNA-binding protein.</text>
</comment>
<comment type="subunit">
    <text evidence="1">Interacts with alkaline nuclease.</text>
</comment>
<comment type="subcellular location">
    <subcellularLocation>
        <location evidence="2">Host nucleus</location>
    </subcellularLocation>
</comment>
<comment type="similarity">
    <text evidence="2">Belongs to the baculoviridae LEF-3 family.</text>
</comment>
<evidence type="ECO:0000250" key="1"/>
<evidence type="ECO:0000305" key="2"/>
<organismHost>
    <name type="scientific">Orgyia pseudotsugata</name>
    <name type="common">Douglas-fir tussock moth</name>
    <dbReference type="NCBI Taxonomy" id="33414"/>
</organismHost>
<sequence length="373" mass="42593">MMAAKREHADCGAEPARKRVKENYKRVTGKLLSKMTISLENHLYYTFTFRLLNENKTEAYYGNLQCFKDLVEQECYDVSLNFVKTKYNERIEINEYSKCDAAIDENVAVKLCLTRADFENEEIVNVLAKLKCVFKRLGANNYKMVFDINMQDAGGAVFVQQVECFANLKVLASAAKAFVKSPDNFNSLMDFYYKNTNTLFYVHGVRCQHTSKGQNEFLNWTAGPSTSLETPSNTDNEDYINLVHSHSTNNISRANKHLKSMQLSLFKAEQKINDNGKHSFSVQFKTLDSMDDDDDTKWHKCVYYVDSNGNKEDPNDTNAVQKLAMDFDQLATCLADKLTKATIFVTADNADASTMNLLGLLKHDDEECEYQFL</sequence>
<name>LEF3_NPVOP</name>
<dbReference type="EMBL" id="D45397">
    <property type="protein sequence ID" value="BAA08237.1"/>
    <property type="molecule type" value="Genomic_DNA"/>
</dbReference>
<dbReference type="EMBL" id="U75930">
    <property type="protein sequence ID" value="AAC59071.1"/>
    <property type="molecule type" value="Genomic_DNA"/>
</dbReference>
<dbReference type="RefSeq" id="NP_046228.1">
    <property type="nucleotide sequence ID" value="NC_001875.2"/>
</dbReference>
<dbReference type="SMR" id="Q65365"/>
<dbReference type="KEGG" id="vg:912018"/>
<dbReference type="OrthoDB" id="5804at10239"/>
<dbReference type="Proteomes" id="UP000009248">
    <property type="component" value="Genome"/>
</dbReference>
<dbReference type="GO" id="GO:0042025">
    <property type="term" value="C:host cell nucleus"/>
    <property type="evidence" value="ECO:0007669"/>
    <property type="project" value="UniProtKB-SubCell"/>
</dbReference>
<dbReference type="GO" id="GO:0003677">
    <property type="term" value="F:DNA binding"/>
    <property type="evidence" value="ECO:0007669"/>
    <property type="project" value="UniProtKB-KW"/>
</dbReference>
<dbReference type="GO" id="GO:0006355">
    <property type="term" value="P:regulation of DNA-templated transcription"/>
    <property type="evidence" value="ECO:0007669"/>
    <property type="project" value="InterPro"/>
</dbReference>
<dbReference type="GO" id="GO:0019079">
    <property type="term" value="P:viral genome replication"/>
    <property type="evidence" value="ECO:0000250"/>
    <property type="project" value="UniProtKB"/>
</dbReference>
<dbReference type="InterPro" id="IPR008415">
    <property type="entry name" value="Baculo_LEF-3"/>
</dbReference>
<dbReference type="Pfam" id="PF05847">
    <property type="entry name" value="Baculo_LEF-3"/>
    <property type="match status" value="1"/>
</dbReference>
<gene>
    <name type="primary">LEF-3</name>
    <name type="ORF">ORF72</name>
</gene>
<organism>
    <name type="scientific">Orgyia pseudotsugata multicapsid polyhedrosis virus</name>
    <name type="common">OpMNPV</name>
    <dbReference type="NCBI Taxonomy" id="262177"/>
    <lineage>
        <taxon>Viruses</taxon>
        <taxon>Viruses incertae sedis</taxon>
        <taxon>Naldaviricetes</taxon>
        <taxon>Lefavirales</taxon>
        <taxon>Baculoviridae</taxon>
        <taxon>Alphabaculovirus</taxon>
        <taxon>Alphabaculovirus orpseudotsugatae</taxon>
    </lineage>
</organism>
<accession>Q65365</accession>
<accession>O12555</accession>
<accession>O12844</accession>
<reference key="1">
    <citation type="journal article" date="1995" name="Virology">
        <title>Identification, sequence, and transcriptional analysis of lef-3, a gene essential for Orgyia pseudotsugata baculovirus DNA replication.</title>
        <authorList>
            <person name="Ahrens C.H."/>
            <person name="Carlson C."/>
            <person name="Rohrmann G.F."/>
        </authorList>
    </citation>
    <scope>NUCLEOTIDE SEQUENCE [GENOMIC DNA]</scope>
</reference>
<reference key="2">
    <citation type="journal article" date="1997" name="Virology">
        <title>The sequence of the Orgyia pseudotsugata multinucleocapsid nuclear polyhedrosis virus genome.</title>
        <authorList>
            <person name="Ahrens C.H."/>
            <person name="Russell R.R."/>
            <person name="Funk C.J."/>
            <person name="Evans J."/>
            <person name="Harwood S."/>
            <person name="Rohrmann G.F."/>
        </authorList>
    </citation>
    <scope>NUCLEOTIDE SEQUENCE [LARGE SCALE GENOMIC DNA]</scope>
</reference>
<feature type="chain" id="PRO_0000132823" description="Late expression factor 3">
    <location>
        <begin position="1"/>
        <end position="373"/>
    </location>
</feature>